<proteinExistence type="inferred from homology"/>
<comment type="function">
    <text evidence="1">Catalyzes the synthesis of alpha-ribazole-5'-phosphate from nicotinate mononucleotide (NAMN) and 5,6-dimethylbenzimidazole (DMB).</text>
</comment>
<comment type="catalytic activity">
    <reaction>
        <text>5,6-dimethylbenzimidazole + nicotinate beta-D-ribonucleotide = alpha-ribazole 5'-phosphate + nicotinate + H(+)</text>
        <dbReference type="Rhea" id="RHEA:11196"/>
        <dbReference type="ChEBI" id="CHEBI:15378"/>
        <dbReference type="ChEBI" id="CHEBI:15890"/>
        <dbReference type="ChEBI" id="CHEBI:32544"/>
        <dbReference type="ChEBI" id="CHEBI:57502"/>
        <dbReference type="ChEBI" id="CHEBI:57918"/>
        <dbReference type="EC" id="2.4.2.21"/>
    </reaction>
</comment>
<comment type="pathway">
    <text>Nucleoside biosynthesis; alpha-ribazole biosynthesis; alpha-ribazole from 5,6-dimethylbenzimidazole: step 1/2.</text>
</comment>
<comment type="similarity">
    <text evidence="2">Belongs to the CobT family.</text>
</comment>
<reference key="1">
    <citation type="journal article" date="2003" name="Proc. Natl. Acad. Sci. U.S.A.">
        <title>The complete genome sequence of Mycobacterium bovis.</title>
        <authorList>
            <person name="Garnier T."/>
            <person name="Eiglmeier K."/>
            <person name="Camus J.-C."/>
            <person name="Medina N."/>
            <person name="Mansoor H."/>
            <person name="Pryor M."/>
            <person name="Duthoy S."/>
            <person name="Grondin S."/>
            <person name="Lacroix C."/>
            <person name="Monsempe C."/>
            <person name="Simon S."/>
            <person name="Harris B."/>
            <person name="Atkin R."/>
            <person name="Doggett J."/>
            <person name="Mayes R."/>
            <person name="Keating L."/>
            <person name="Wheeler P.R."/>
            <person name="Parkhill J."/>
            <person name="Barrell B.G."/>
            <person name="Cole S.T."/>
            <person name="Gordon S.V."/>
            <person name="Hewinson R.G."/>
        </authorList>
    </citation>
    <scope>NUCLEOTIDE SEQUENCE [LARGE SCALE GENOMIC DNA]</scope>
    <source>
        <strain>ATCC BAA-935 / AF2122/97</strain>
    </source>
</reference>
<reference key="2">
    <citation type="journal article" date="2017" name="Genome Announc.">
        <title>Updated reference genome sequence and annotation of Mycobacterium bovis AF2122/97.</title>
        <authorList>
            <person name="Malone K.M."/>
            <person name="Farrell D."/>
            <person name="Stuber T.P."/>
            <person name="Schubert O.T."/>
            <person name="Aebersold R."/>
            <person name="Robbe-Austerman S."/>
            <person name="Gordon S.V."/>
        </authorList>
    </citation>
    <scope>NUCLEOTIDE SEQUENCE [LARGE SCALE GENOMIC DNA]</scope>
    <scope>GENOME REANNOTATION</scope>
    <source>
        <strain>ATCC BAA-935 / AF2122/97</strain>
    </source>
</reference>
<feature type="chain" id="PRO_0000167057" description="Nicotinate-nucleotide--dimethylbenzimidazole phosphoribosyltransferase">
    <location>
        <begin position="1"/>
        <end position="361"/>
    </location>
</feature>
<feature type="active site" description="Proton acceptor" evidence="1">
    <location>
        <position position="314"/>
    </location>
</feature>
<keyword id="KW-0169">Cobalamin biosynthesis</keyword>
<keyword id="KW-0328">Glycosyltransferase</keyword>
<keyword id="KW-1185">Reference proteome</keyword>
<keyword id="KW-0808">Transferase</keyword>
<gene>
    <name type="primary">cobT</name>
    <name type="ordered locus">BQ2027_MB2230</name>
</gene>
<accession>P63842</accession>
<accession>A0A1R3Y0G7</accession>
<accession>Q10396</accession>
<accession>X2BK38</accession>
<organism>
    <name type="scientific">Mycobacterium bovis (strain ATCC BAA-935 / AF2122/97)</name>
    <dbReference type="NCBI Taxonomy" id="233413"/>
    <lineage>
        <taxon>Bacteria</taxon>
        <taxon>Bacillati</taxon>
        <taxon>Actinomycetota</taxon>
        <taxon>Actinomycetes</taxon>
        <taxon>Mycobacteriales</taxon>
        <taxon>Mycobacteriaceae</taxon>
        <taxon>Mycobacterium</taxon>
        <taxon>Mycobacterium tuberculosis complex</taxon>
    </lineage>
</organism>
<protein>
    <recommendedName>
        <fullName>Nicotinate-nucleotide--dimethylbenzimidazole phosphoribosyltransferase</fullName>
        <shortName>NN:DBI PRT</shortName>
        <ecNumber>2.4.2.21</ecNumber>
    </recommendedName>
    <alternativeName>
        <fullName>N(1)-alpha-phosphoribosyltransferase</fullName>
    </alternativeName>
</protein>
<sequence>MIGFAPVSTPDAAAEAAARARQDSLTKPRGALGSLEDLSVWVASCQQRCPPRQFERARVVVFAGDHGVARSGVSAYPPEVTAQMVANIDAGGAAINALADVAGATVRVADLAVDADPLSERIGAHKVRRGSGNIATEDALTNDETAAAITAGQQIADEEVDAGADLLIAGDMGIGNTTAAAVLVAALTDAEPVAVVGFGTGIDDAGWARKTAAVRDALFRVRPVLPDPVGLLRCAGGADLAAIAGFCAQAAVRRTPLLLDGVAVTAAALVAERLAPGAHRWWQAGHRSSEPGHGLALAALGLDPIVDLHMRLGEGTGAAVALMVLRAAVAALSSMATFTEAGVSTRSVDGVDRTAPPAVSP</sequence>
<dbReference type="EC" id="2.4.2.21"/>
<dbReference type="EMBL" id="LT708304">
    <property type="protein sequence ID" value="SIU00838.1"/>
    <property type="molecule type" value="Genomic_DNA"/>
</dbReference>
<dbReference type="RefSeq" id="NP_855879.1">
    <property type="nucleotide sequence ID" value="NC_002945.3"/>
</dbReference>
<dbReference type="RefSeq" id="WP_003411429.1">
    <property type="nucleotide sequence ID" value="NC_002945.4"/>
</dbReference>
<dbReference type="SMR" id="P63842"/>
<dbReference type="GeneID" id="45426183"/>
<dbReference type="KEGG" id="mbo:BQ2027_MB2230"/>
<dbReference type="PATRIC" id="fig|233413.5.peg.2446"/>
<dbReference type="UniPathway" id="UPA00061">
    <property type="reaction ID" value="UER00516"/>
</dbReference>
<dbReference type="Proteomes" id="UP000001419">
    <property type="component" value="Chromosome"/>
</dbReference>
<dbReference type="GO" id="GO:0008939">
    <property type="term" value="F:nicotinate-nucleotide-dimethylbenzimidazole phosphoribosyltransferase activity"/>
    <property type="evidence" value="ECO:0007669"/>
    <property type="project" value="UniProtKB-UniRule"/>
</dbReference>
<dbReference type="GO" id="GO:0009236">
    <property type="term" value="P:cobalamin biosynthetic process"/>
    <property type="evidence" value="ECO:0007669"/>
    <property type="project" value="UniProtKB-KW"/>
</dbReference>
<dbReference type="CDD" id="cd02439">
    <property type="entry name" value="DMB-PRT_CobT"/>
    <property type="match status" value="1"/>
</dbReference>
<dbReference type="Gene3D" id="1.10.1610.10">
    <property type="match status" value="1"/>
</dbReference>
<dbReference type="Gene3D" id="3.40.50.10210">
    <property type="match status" value="1"/>
</dbReference>
<dbReference type="HAMAP" id="MF_00230">
    <property type="entry name" value="CobT"/>
    <property type="match status" value="1"/>
</dbReference>
<dbReference type="InterPro" id="IPR003200">
    <property type="entry name" value="Nict_dMeBzImd_PRibTrfase"/>
</dbReference>
<dbReference type="InterPro" id="IPR017846">
    <property type="entry name" value="Nict_dMeBzImd_PRibTrfase_bact"/>
</dbReference>
<dbReference type="InterPro" id="IPR023195">
    <property type="entry name" value="Nict_dMeBzImd_PRibTrfase_N"/>
</dbReference>
<dbReference type="InterPro" id="IPR036087">
    <property type="entry name" value="Nict_dMeBzImd_PRibTrfase_sf"/>
</dbReference>
<dbReference type="NCBIfam" id="TIGR03160">
    <property type="entry name" value="cobT_DBIPRT"/>
    <property type="match status" value="1"/>
</dbReference>
<dbReference type="NCBIfam" id="NF000996">
    <property type="entry name" value="PRK00105.1"/>
    <property type="match status" value="1"/>
</dbReference>
<dbReference type="PANTHER" id="PTHR43463">
    <property type="entry name" value="NICOTINATE-NUCLEOTIDE--DIMETHYLBENZIMIDAZOLE PHOSPHORIBOSYLTRANSFERASE"/>
    <property type="match status" value="1"/>
</dbReference>
<dbReference type="PANTHER" id="PTHR43463:SF1">
    <property type="entry name" value="NICOTINATE-NUCLEOTIDE--DIMETHYLBENZIMIDAZOLE PHOSPHORIBOSYLTRANSFERASE"/>
    <property type="match status" value="1"/>
</dbReference>
<dbReference type="Pfam" id="PF02277">
    <property type="entry name" value="DBI_PRT"/>
    <property type="match status" value="1"/>
</dbReference>
<dbReference type="SUPFAM" id="SSF52733">
    <property type="entry name" value="Nicotinate mononucleotide:5,6-dimethylbenzimidazole phosphoribosyltransferase (CobT)"/>
    <property type="match status" value="1"/>
</dbReference>
<name>COBT_MYCBO</name>
<evidence type="ECO:0000250" key="1"/>
<evidence type="ECO:0000305" key="2"/>